<feature type="chain" id="PRO_1000092997" description="Peptidyl-tRNA hydrolase">
    <location>
        <begin position="1"/>
        <end position="186"/>
    </location>
</feature>
<feature type="active site" description="Proton acceptor" evidence="1">
    <location>
        <position position="18"/>
    </location>
</feature>
<feature type="binding site" evidence="1">
    <location>
        <position position="13"/>
    </location>
    <ligand>
        <name>tRNA</name>
        <dbReference type="ChEBI" id="CHEBI:17843"/>
    </ligand>
</feature>
<feature type="binding site" evidence="1">
    <location>
        <position position="59"/>
    </location>
    <ligand>
        <name>tRNA</name>
        <dbReference type="ChEBI" id="CHEBI:17843"/>
    </ligand>
</feature>
<feature type="binding site" evidence="1">
    <location>
        <position position="61"/>
    </location>
    <ligand>
        <name>tRNA</name>
        <dbReference type="ChEBI" id="CHEBI:17843"/>
    </ligand>
</feature>
<feature type="binding site" evidence="1">
    <location>
        <position position="107"/>
    </location>
    <ligand>
        <name>tRNA</name>
        <dbReference type="ChEBI" id="CHEBI:17843"/>
    </ligand>
</feature>
<feature type="site" description="Discriminates between blocked and unblocked aminoacyl-tRNA" evidence="1">
    <location>
        <position position="8"/>
    </location>
</feature>
<feature type="site" description="Stabilizes the basic form of H active site to accept a proton" evidence="1">
    <location>
        <position position="86"/>
    </location>
</feature>
<keyword id="KW-0963">Cytoplasm</keyword>
<keyword id="KW-0378">Hydrolase</keyword>
<keyword id="KW-0694">RNA-binding</keyword>
<keyword id="KW-0820">tRNA-binding</keyword>
<name>PTH_THESQ</name>
<reference key="1">
    <citation type="journal article" date="2011" name="J. Bacteriol.">
        <title>Genome sequence of Thermotoga sp. strain RQ2, a hyperthermophilic bacterium isolated from a geothermally heated region of the seafloor near Ribeira Quente, the Azores.</title>
        <authorList>
            <person name="Swithers K.S."/>
            <person name="DiPippo J.L."/>
            <person name="Bruce D.C."/>
            <person name="Detter C."/>
            <person name="Tapia R."/>
            <person name="Han S."/>
            <person name="Saunders E."/>
            <person name="Goodwin L.A."/>
            <person name="Han J."/>
            <person name="Woyke T."/>
            <person name="Pitluck S."/>
            <person name="Pennacchio L."/>
            <person name="Nolan M."/>
            <person name="Mikhailova N."/>
            <person name="Lykidis A."/>
            <person name="Land M.L."/>
            <person name="Brettin T."/>
            <person name="Stetter K.O."/>
            <person name="Nelson K.E."/>
            <person name="Gogarten J.P."/>
            <person name="Noll K.M."/>
        </authorList>
    </citation>
    <scope>NUCLEOTIDE SEQUENCE [LARGE SCALE GENOMIC DNA]</scope>
    <source>
        <strain>RQ2</strain>
    </source>
</reference>
<sequence>MVVVGLGNPGPRYAFTRHNVGFLFLDFLKNKDWKTEKYFAWNKINLAGNEVALVKPLTYMNLSGLAMPHVLKFFSASLDDIIVVYDDVSLKLGKIRIRKKGSDGGHNGMKSIIQALGTQEIKRIRVGIGDKPEGMDLVDFVLGEFSDEEWIILNKVFEVMKEALEVILVEGIEKAMSIYNSLEVRV</sequence>
<organism>
    <name type="scientific">Thermotoga sp. (strain RQ2)</name>
    <dbReference type="NCBI Taxonomy" id="126740"/>
    <lineage>
        <taxon>Bacteria</taxon>
        <taxon>Thermotogati</taxon>
        <taxon>Thermotogota</taxon>
        <taxon>Thermotogae</taxon>
        <taxon>Thermotogales</taxon>
        <taxon>Thermotogaceae</taxon>
        <taxon>Thermotoga</taxon>
    </lineage>
</organism>
<gene>
    <name evidence="1" type="primary">pth</name>
    <name type="ordered locus">TRQ2_1290</name>
</gene>
<protein>
    <recommendedName>
        <fullName evidence="1">Peptidyl-tRNA hydrolase</fullName>
        <shortName evidence="1">Pth</shortName>
        <ecNumber evidence="1">3.1.1.29</ecNumber>
    </recommendedName>
</protein>
<evidence type="ECO:0000255" key="1">
    <source>
        <dbReference type="HAMAP-Rule" id="MF_00083"/>
    </source>
</evidence>
<accession>B1LBD6</accession>
<comment type="function">
    <text evidence="1">Hydrolyzes ribosome-free peptidyl-tRNAs (with 1 or more amino acids incorporated), which drop off the ribosome during protein synthesis, or as a result of ribosome stalling.</text>
</comment>
<comment type="function">
    <text evidence="1">Catalyzes the release of premature peptidyl moieties from peptidyl-tRNA molecules trapped in stalled 50S ribosomal subunits, and thus maintains levels of free tRNAs and 50S ribosomes.</text>
</comment>
<comment type="catalytic activity">
    <reaction evidence="1">
        <text>an N-acyl-L-alpha-aminoacyl-tRNA + H2O = an N-acyl-L-amino acid + a tRNA + H(+)</text>
        <dbReference type="Rhea" id="RHEA:54448"/>
        <dbReference type="Rhea" id="RHEA-COMP:10123"/>
        <dbReference type="Rhea" id="RHEA-COMP:13883"/>
        <dbReference type="ChEBI" id="CHEBI:15377"/>
        <dbReference type="ChEBI" id="CHEBI:15378"/>
        <dbReference type="ChEBI" id="CHEBI:59874"/>
        <dbReference type="ChEBI" id="CHEBI:78442"/>
        <dbReference type="ChEBI" id="CHEBI:138191"/>
        <dbReference type="EC" id="3.1.1.29"/>
    </reaction>
</comment>
<comment type="subunit">
    <text evidence="1">Monomer.</text>
</comment>
<comment type="subcellular location">
    <subcellularLocation>
        <location evidence="1">Cytoplasm</location>
    </subcellularLocation>
</comment>
<comment type="similarity">
    <text evidence="1">Belongs to the PTH family.</text>
</comment>
<proteinExistence type="inferred from homology"/>
<dbReference type="EC" id="3.1.1.29" evidence="1"/>
<dbReference type="EMBL" id="CP000969">
    <property type="protein sequence ID" value="ACB09634.1"/>
    <property type="molecule type" value="Genomic_DNA"/>
</dbReference>
<dbReference type="RefSeq" id="WP_012311044.1">
    <property type="nucleotide sequence ID" value="NC_010483.1"/>
</dbReference>
<dbReference type="SMR" id="B1LBD6"/>
<dbReference type="KEGG" id="trq:TRQ2_1290"/>
<dbReference type="HOGENOM" id="CLU_062456_4_1_0"/>
<dbReference type="Proteomes" id="UP000001687">
    <property type="component" value="Chromosome"/>
</dbReference>
<dbReference type="GO" id="GO:0005737">
    <property type="term" value="C:cytoplasm"/>
    <property type="evidence" value="ECO:0007669"/>
    <property type="project" value="UniProtKB-SubCell"/>
</dbReference>
<dbReference type="GO" id="GO:0004045">
    <property type="term" value="F:peptidyl-tRNA hydrolase activity"/>
    <property type="evidence" value="ECO:0007669"/>
    <property type="project" value="UniProtKB-UniRule"/>
</dbReference>
<dbReference type="GO" id="GO:0000049">
    <property type="term" value="F:tRNA binding"/>
    <property type="evidence" value="ECO:0007669"/>
    <property type="project" value="UniProtKB-UniRule"/>
</dbReference>
<dbReference type="GO" id="GO:0006515">
    <property type="term" value="P:protein quality control for misfolded or incompletely synthesized proteins"/>
    <property type="evidence" value="ECO:0007669"/>
    <property type="project" value="UniProtKB-UniRule"/>
</dbReference>
<dbReference type="GO" id="GO:0072344">
    <property type="term" value="P:rescue of stalled ribosome"/>
    <property type="evidence" value="ECO:0007669"/>
    <property type="project" value="UniProtKB-UniRule"/>
</dbReference>
<dbReference type="CDD" id="cd00462">
    <property type="entry name" value="PTH"/>
    <property type="match status" value="1"/>
</dbReference>
<dbReference type="FunFam" id="3.40.50.1470:FF:000001">
    <property type="entry name" value="Peptidyl-tRNA hydrolase"/>
    <property type="match status" value="1"/>
</dbReference>
<dbReference type="Gene3D" id="3.40.50.1470">
    <property type="entry name" value="Peptidyl-tRNA hydrolase"/>
    <property type="match status" value="1"/>
</dbReference>
<dbReference type="HAMAP" id="MF_00083">
    <property type="entry name" value="Pept_tRNA_hydro_bact"/>
    <property type="match status" value="1"/>
</dbReference>
<dbReference type="InterPro" id="IPR001328">
    <property type="entry name" value="Pept_tRNA_hydro"/>
</dbReference>
<dbReference type="InterPro" id="IPR018171">
    <property type="entry name" value="Pept_tRNA_hydro_CS"/>
</dbReference>
<dbReference type="InterPro" id="IPR036416">
    <property type="entry name" value="Pept_tRNA_hydro_sf"/>
</dbReference>
<dbReference type="NCBIfam" id="TIGR00447">
    <property type="entry name" value="pth"/>
    <property type="match status" value="1"/>
</dbReference>
<dbReference type="PANTHER" id="PTHR17224">
    <property type="entry name" value="PEPTIDYL-TRNA HYDROLASE"/>
    <property type="match status" value="1"/>
</dbReference>
<dbReference type="PANTHER" id="PTHR17224:SF1">
    <property type="entry name" value="PEPTIDYL-TRNA HYDROLASE"/>
    <property type="match status" value="1"/>
</dbReference>
<dbReference type="Pfam" id="PF01195">
    <property type="entry name" value="Pept_tRNA_hydro"/>
    <property type="match status" value="1"/>
</dbReference>
<dbReference type="SUPFAM" id="SSF53178">
    <property type="entry name" value="Peptidyl-tRNA hydrolase-like"/>
    <property type="match status" value="1"/>
</dbReference>
<dbReference type="PROSITE" id="PS01195">
    <property type="entry name" value="PEPT_TRNA_HYDROL_1"/>
    <property type="match status" value="1"/>
</dbReference>
<dbReference type="PROSITE" id="PS01196">
    <property type="entry name" value="PEPT_TRNA_HYDROL_2"/>
    <property type="match status" value="1"/>
</dbReference>